<evidence type="ECO:0000250" key="1"/>
<evidence type="ECO:0000255" key="2"/>
<evidence type="ECO:0000305" key="3"/>
<sequence length="101" mass="11576">MIRYVLVIITCFLVAAKSHVTIGPVPNNLGFPDRSILLALVAPTCEPELEGLVDECVNNVTIRNVCYDCFREGLTKVYSYCCHKYNHMYEWCLEYFSGEMK</sequence>
<name>VP214_LYCMC</name>
<dbReference type="EMBL" id="GT029212">
    <property type="status" value="NOT_ANNOTATED_CDS"/>
    <property type="molecule type" value="mRNA"/>
</dbReference>
<dbReference type="GO" id="GO:0005576">
    <property type="term" value="C:extracellular region"/>
    <property type="evidence" value="ECO:0007669"/>
    <property type="project" value="UniProtKB-SubCell"/>
</dbReference>
<comment type="subcellular location">
    <subcellularLocation>
        <location evidence="1">Secreted</location>
    </subcellularLocation>
</comment>
<comment type="tissue specificity">
    <text evidence="3">Expressed by the venom gland.</text>
</comment>
<comment type="PTM">
    <text evidence="1">Contains 3 disulfide bonds.</text>
</comment>
<accession>P0CJ10</accession>
<organism>
    <name type="scientific">Lychas mucronatus</name>
    <name type="common">Chinese swimming scorpion</name>
    <dbReference type="NCBI Taxonomy" id="172552"/>
    <lineage>
        <taxon>Eukaryota</taxon>
        <taxon>Metazoa</taxon>
        <taxon>Ecdysozoa</taxon>
        <taxon>Arthropoda</taxon>
        <taxon>Chelicerata</taxon>
        <taxon>Arachnida</taxon>
        <taxon>Scorpiones</taxon>
        <taxon>Buthida</taxon>
        <taxon>Buthoidea</taxon>
        <taxon>Buthidae</taxon>
        <taxon>Lychas</taxon>
    </lineage>
</organism>
<proteinExistence type="inferred from homology"/>
<feature type="signal peptide" evidence="2">
    <location>
        <begin position="1"/>
        <end position="16"/>
    </location>
</feature>
<feature type="chain" id="PRO_0000403902" description="Venom protein 214">
    <location>
        <begin position="17"/>
        <end position="101"/>
    </location>
</feature>
<protein>
    <recommendedName>
        <fullName>Venom protein 214</fullName>
    </recommendedName>
</protein>
<keyword id="KW-1015">Disulfide bond</keyword>
<keyword id="KW-0964">Secreted</keyword>
<keyword id="KW-0732">Signal</keyword>
<reference key="1">
    <citation type="journal article" date="2010" name="BMC Genomics">
        <title>Comparative venom gland transcriptome analysis of the scorpion Lychas mucronatus reveals intraspecific toxic gene diversity and new venomous components.</title>
        <authorList>
            <person name="Zhao R."/>
            <person name="Ma Y."/>
            <person name="He Y."/>
            <person name="Di Z."/>
            <person name="Wu Y.-L."/>
            <person name="Cao Z.-J."/>
            <person name="Li W.-X."/>
        </authorList>
    </citation>
    <scope>NUCLEOTIDE SEQUENCE [MRNA]</scope>
    <source>
        <strain>Yunnan</strain>
        <tissue>Venom gland</tissue>
    </source>
</reference>